<comment type="function">
    <text evidence="1">Functions as a ribosomal silencing factor. Interacts with ribosomal protein uL14 (rplN), blocking formation of intersubunit bridge B8. Prevents association of the 30S and 50S ribosomal subunits and the formation of functional ribosomes, thus repressing translation.</text>
</comment>
<comment type="subunit">
    <text evidence="1">Interacts with ribosomal protein uL14 (rplN).</text>
</comment>
<comment type="subcellular location">
    <subcellularLocation>
        <location evidence="1">Cytoplasm</location>
    </subcellularLocation>
</comment>
<comment type="similarity">
    <text evidence="1">Belongs to the Iojap/RsfS family.</text>
</comment>
<proteinExistence type="inferred from homology"/>
<gene>
    <name evidence="1" type="primary">rsfS</name>
    <name type="synonym">yqeL</name>
    <name type="ordered locus">BSU25620</name>
</gene>
<dbReference type="EMBL" id="D84432">
    <property type="protein sequence ID" value="BAA12449.1"/>
    <property type="molecule type" value="Genomic_DNA"/>
</dbReference>
<dbReference type="EMBL" id="AL009126">
    <property type="protein sequence ID" value="CAB14504.1"/>
    <property type="molecule type" value="Genomic_DNA"/>
</dbReference>
<dbReference type="PIR" id="H69951">
    <property type="entry name" value="H69951"/>
</dbReference>
<dbReference type="RefSeq" id="NP_390440.1">
    <property type="nucleotide sequence ID" value="NC_000964.3"/>
</dbReference>
<dbReference type="RefSeq" id="WP_003229971.1">
    <property type="nucleotide sequence ID" value="NZ_OZ025638.1"/>
</dbReference>
<dbReference type="SMR" id="P54457"/>
<dbReference type="FunCoup" id="P54457">
    <property type="interactions" value="451"/>
</dbReference>
<dbReference type="STRING" id="224308.BSU25620"/>
<dbReference type="PaxDb" id="224308-BSU25620"/>
<dbReference type="EnsemblBacteria" id="CAB14504">
    <property type="protein sequence ID" value="CAB14504"/>
    <property type="gene ID" value="BSU_25620"/>
</dbReference>
<dbReference type="GeneID" id="937819"/>
<dbReference type="KEGG" id="bsu:BSU25620"/>
<dbReference type="PATRIC" id="fig|224308.179.peg.2785"/>
<dbReference type="eggNOG" id="COG0799">
    <property type="taxonomic scope" value="Bacteria"/>
</dbReference>
<dbReference type="InParanoid" id="P54457"/>
<dbReference type="OrthoDB" id="9793681at2"/>
<dbReference type="PhylomeDB" id="P54457"/>
<dbReference type="BioCyc" id="BSUB:BSU25620-MONOMER"/>
<dbReference type="Proteomes" id="UP000001570">
    <property type="component" value="Chromosome"/>
</dbReference>
<dbReference type="GO" id="GO:0005737">
    <property type="term" value="C:cytoplasm"/>
    <property type="evidence" value="ECO:0007669"/>
    <property type="project" value="UniProtKB-SubCell"/>
</dbReference>
<dbReference type="GO" id="GO:0043023">
    <property type="term" value="F:ribosomal large subunit binding"/>
    <property type="evidence" value="ECO:0000318"/>
    <property type="project" value="GO_Central"/>
</dbReference>
<dbReference type="GO" id="GO:0042256">
    <property type="term" value="P:cytosolic ribosome assembly"/>
    <property type="evidence" value="ECO:0007669"/>
    <property type="project" value="UniProtKB-UniRule"/>
</dbReference>
<dbReference type="GO" id="GO:0090071">
    <property type="term" value="P:negative regulation of ribosome biogenesis"/>
    <property type="evidence" value="ECO:0000318"/>
    <property type="project" value="GO_Central"/>
</dbReference>
<dbReference type="GO" id="GO:0017148">
    <property type="term" value="P:negative regulation of translation"/>
    <property type="evidence" value="ECO:0000318"/>
    <property type="project" value="GO_Central"/>
</dbReference>
<dbReference type="FunFam" id="3.30.460.10:FF:000015">
    <property type="entry name" value="Ribosomal silencing factor RsfS"/>
    <property type="match status" value="1"/>
</dbReference>
<dbReference type="Gene3D" id="3.30.460.10">
    <property type="entry name" value="Beta Polymerase, domain 2"/>
    <property type="match status" value="1"/>
</dbReference>
<dbReference type="HAMAP" id="MF_01477">
    <property type="entry name" value="Iojap_RsfS"/>
    <property type="match status" value="1"/>
</dbReference>
<dbReference type="InterPro" id="IPR004394">
    <property type="entry name" value="Iojap/RsfS/C7orf30"/>
</dbReference>
<dbReference type="InterPro" id="IPR043519">
    <property type="entry name" value="NT_sf"/>
</dbReference>
<dbReference type="NCBIfam" id="TIGR00090">
    <property type="entry name" value="rsfS_iojap_ybeB"/>
    <property type="match status" value="1"/>
</dbReference>
<dbReference type="PANTHER" id="PTHR21043">
    <property type="entry name" value="IOJAP SUPERFAMILY ORTHOLOG"/>
    <property type="match status" value="1"/>
</dbReference>
<dbReference type="PANTHER" id="PTHR21043:SF0">
    <property type="entry name" value="MITOCHONDRIAL ASSEMBLY OF RIBOSOMAL LARGE SUBUNIT PROTEIN 1"/>
    <property type="match status" value="1"/>
</dbReference>
<dbReference type="Pfam" id="PF02410">
    <property type="entry name" value="RsfS"/>
    <property type="match status" value="1"/>
</dbReference>
<dbReference type="SUPFAM" id="SSF81301">
    <property type="entry name" value="Nucleotidyltransferase"/>
    <property type="match status" value="1"/>
</dbReference>
<keyword id="KW-0963">Cytoplasm</keyword>
<keyword id="KW-1185">Reference proteome</keyword>
<keyword id="KW-0678">Repressor</keyword>
<keyword id="KW-0810">Translation regulation</keyword>
<protein>
    <recommendedName>
        <fullName evidence="1">Ribosomal silencing factor RsfS</fullName>
    </recommendedName>
</protein>
<organism>
    <name type="scientific">Bacillus subtilis (strain 168)</name>
    <dbReference type="NCBI Taxonomy" id="224308"/>
    <lineage>
        <taxon>Bacteria</taxon>
        <taxon>Bacillati</taxon>
        <taxon>Bacillota</taxon>
        <taxon>Bacilli</taxon>
        <taxon>Bacillales</taxon>
        <taxon>Bacillaceae</taxon>
        <taxon>Bacillus</taxon>
    </lineage>
</organism>
<accession>P54457</accession>
<reference key="1">
    <citation type="journal article" date="1996" name="Microbiology">
        <title>Systematic sequencing of the 283 kb 210 degrees-232 degrees region of the Bacillus subtilis genome containing the skin element and many sporulation genes.</title>
        <authorList>
            <person name="Mizuno M."/>
            <person name="Masuda S."/>
            <person name="Takemaru K."/>
            <person name="Hosono S."/>
            <person name="Sato T."/>
            <person name="Takeuchi M."/>
            <person name="Kobayashi Y."/>
        </authorList>
    </citation>
    <scope>NUCLEOTIDE SEQUENCE [GENOMIC DNA]</scope>
    <source>
        <strain>168 / JH642</strain>
    </source>
</reference>
<reference key="2">
    <citation type="journal article" date="1997" name="Nature">
        <title>The complete genome sequence of the Gram-positive bacterium Bacillus subtilis.</title>
        <authorList>
            <person name="Kunst F."/>
            <person name="Ogasawara N."/>
            <person name="Moszer I."/>
            <person name="Albertini A.M."/>
            <person name="Alloni G."/>
            <person name="Azevedo V."/>
            <person name="Bertero M.G."/>
            <person name="Bessieres P."/>
            <person name="Bolotin A."/>
            <person name="Borchert S."/>
            <person name="Borriss R."/>
            <person name="Boursier L."/>
            <person name="Brans A."/>
            <person name="Braun M."/>
            <person name="Brignell S.C."/>
            <person name="Bron S."/>
            <person name="Brouillet S."/>
            <person name="Bruschi C.V."/>
            <person name="Caldwell B."/>
            <person name="Capuano V."/>
            <person name="Carter N.M."/>
            <person name="Choi S.-K."/>
            <person name="Codani J.-J."/>
            <person name="Connerton I.F."/>
            <person name="Cummings N.J."/>
            <person name="Daniel R.A."/>
            <person name="Denizot F."/>
            <person name="Devine K.M."/>
            <person name="Duesterhoeft A."/>
            <person name="Ehrlich S.D."/>
            <person name="Emmerson P.T."/>
            <person name="Entian K.-D."/>
            <person name="Errington J."/>
            <person name="Fabret C."/>
            <person name="Ferrari E."/>
            <person name="Foulger D."/>
            <person name="Fritz C."/>
            <person name="Fujita M."/>
            <person name="Fujita Y."/>
            <person name="Fuma S."/>
            <person name="Galizzi A."/>
            <person name="Galleron N."/>
            <person name="Ghim S.-Y."/>
            <person name="Glaser P."/>
            <person name="Goffeau A."/>
            <person name="Golightly E.J."/>
            <person name="Grandi G."/>
            <person name="Guiseppi G."/>
            <person name="Guy B.J."/>
            <person name="Haga K."/>
            <person name="Haiech J."/>
            <person name="Harwood C.R."/>
            <person name="Henaut A."/>
            <person name="Hilbert H."/>
            <person name="Holsappel S."/>
            <person name="Hosono S."/>
            <person name="Hullo M.-F."/>
            <person name="Itaya M."/>
            <person name="Jones L.-M."/>
            <person name="Joris B."/>
            <person name="Karamata D."/>
            <person name="Kasahara Y."/>
            <person name="Klaerr-Blanchard M."/>
            <person name="Klein C."/>
            <person name="Kobayashi Y."/>
            <person name="Koetter P."/>
            <person name="Koningstein G."/>
            <person name="Krogh S."/>
            <person name="Kumano M."/>
            <person name="Kurita K."/>
            <person name="Lapidus A."/>
            <person name="Lardinois S."/>
            <person name="Lauber J."/>
            <person name="Lazarevic V."/>
            <person name="Lee S.-M."/>
            <person name="Levine A."/>
            <person name="Liu H."/>
            <person name="Masuda S."/>
            <person name="Mauel C."/>
            <person name="Medigue C."/>
            <person name="Medina N."/>
            <person name="Mellado R.P."/>
            <person name="Mizuno M."/>
            <person name="Moestl D."/>
            <person name="Nakai S."/>
            <person name="Noback M."/>
            <person name="Noone D."/>
            <person name="O'Reilly M."/>
            <person name="Ogawa K."/>
            <person name="Ogiwara A."/>
            <person name="Oudega B."/>
            <person name="Park S.-H."/>
            <person name="Parro V."/>
            <person name="Pohl T.M."/>
            <person name="Portetelle D."/>
            <person name="Porwollik S."/>
            <person name="Prescott A.M."/>
            <person name="Presecan E."/>
            <person name="Pujic P."/>
            <person name="Purnelle B."/>
            <person name="Rapoport G."/>
            <person name="Rey M."/>
            <person name="Reynolds S."/>
            <person name="Rieger M."/>
            <person name="Rivolta C."/>
            <person name="Rocha E."/>
            <person name="Roche B."/>
            <person name="Rose M."/>
            <person name="Sadaie Y."/>
            <person name="Sato T."/>
            <person name="Scanlan E."/>
            <person name="Schleich S."/>
            <person name="Schroeter R."/>
            <person name="Scoffone F."/>
            <person name="Sekiguchi J."/>
            <person name="Sekowska A."/>
            <person name="Seror S.J."/>
            <person name="Serror P."/>
            <person name="Shin B.-S."/>
            <person name="Soldo B."/>
            <person name="Sorokin A."/>
            <person name="Tacconi E."/>
            <person name="Takagi T."/>
            <person name="Takahashi H."/>
            <person name="Takemaru K."/>
            <person name="Takeuchi M."/>
            <person name="Tamakoshi A."/>
            <person name="Tanaka T."/>
            <person name="Terpstra P."/>
            <person name="Tognoni A."/>
            <person name="Tosato V."/>
            <person name="Uchiyama S."/>
            <person name="Vandenbol M."/>
            <person name="Vannier F."/>
            <person name="Vassarotti A."/>
            <person name="Viari A."/>
            <person name="Wambutt R."/>
            <person name="Wedler E."/>
            <person name="Wedler H."/>
            <person name="Weitzenegger T."/>
            <person name="Winters P."/>
            <person name="Wipat A."/>
            <person name="Yamamoto H."/>
            <person name="Yamane K."/>
            <person name="Yasumoto K."/>
            <person name="Yata K."/>
            <person name="Yoshida K."/>
            <person name="Yoshikawa H.-F."/>
            <person name="Zumstein E."/>
            <person name="Yoshikawa H."/>
            <person name="Danchin A."/>
        </authorList>
    </citation>
    <scope>NUCLEOTIDE SEQUENCE [LARGE SCALE GENOMIC DNA]</scope>
    <source>
        <strain>168</strain>
    </source>
</reference>
<name>IOJAP_BACSU</name>
<sequence length="118" mass="13299">MNQKSILKIAAAACDDKRAEDILALDMEGISLVADYFLICHGNSDKQVQAIAREIKDQADENGIQVKKMEGFDEARWVLVDLGDVVVHVFHKDERSYYNLEKLWGDAPLADLDFGMNQ</sequence>
<feature type="chain" id="PRO_0000049787" description="Ribosomal silencing factor RsfS">
    <location>
        <begin position="1"/>
        <end position="118"/>
    </location>
</feature>
<evidence type="ECO:0000255" key="1">
    <source>
        <dbReference type="HAMAP-Rule" id="MF_01477"/>
    </source>
</evidence>